<evidence type="ECO:0000255" key="1">
    <source>
        <dbReference type="HAMAP-Rule" id="MF_00358"/>
    </source>
</evidence>
<evidence type="ECO:0000305" key="2"/>
<proteinExistence type="inferred from homology"/>
<dbReference type="EMBL" id="CP000252">
    <property type="protein sequence ID" value="ABC78535.1"/>
    <property type="molecule type" value="Genomic_DNA"/>
</dbReference>
<dbReference type="RefSeq" id="WP_011418554.1">
    <property type="nucleotide sequence ID" value="NC_007759.1"/>
</dbReference>
<dbReference type="SMR" id="Q2LWS7"/>
<dbReference type="FunCoup" id="Q2LWS7">
    <property type="interactions" value="458"/>
</dbReference>
<dbReference type="STRING" id="56780.SYN_01767"/>
<dbReference type="KEGG" id="sat:SYN_01767"/>
<dbReference type="eggNOG" id="COG0828">
    <property type="taxonomic scope" value="Bacteria"/>
</dbReference>
<dbReference type="HOGENOM" id="CLU_159258_0_2_7"/>
<dbReference type="InParanoid" id="Q2LWS7"/>
<dbReference type="OrthoDB" id="9811907at2"/>
<dbReference type="Proteomes" id="UP000001933">
    <property type="component" value="Chromosome"/>
</dbReference>
<dbReference type="GO" id="GO:1990904">
    <property type="term" value="C:ribonucleoprotein complex"/>
    <property type="evidence" value="ECO:0007669"/>
    <property type="project" value="UniProtKB-KW"/>
</dbReference>
<dbReference type="GO" id="GO:0005840">
    <property type="term" value="C:ribosome"/>
    <property type="evidence" value="ECO:0007669"/>
    <property type="project" value="UniProtKB-KW"/>
</dbReference>
<dbReference type="GO" id="GO:0003735">
    <property type="term" value="F:structural constituent of ribosome"/>
    <property type="evidence" value="ECO:0007669"/>
    <property type="project" value="InterPro"/>
</dbReference>
<dbReference type="GO" id="GO:0006412">
    <property type="term" value="P:translation"/>
    <property type="evidence" value="ECO:0007669"/>
    <property type="project" value="UniProtKB-UniRule"/>
</dbReference>
<dbReference type="Gene3D" id="1.20.5.1150">
    <property type="entry name" value="Ribosomal protein S8"/>
    <property type="match status" value="1"/>
</dbReference>
<dbReference type="HAMAP" id="MF_00358">
    <property type="entry name" value="Ribosomal_bS21"/>
    <property type="match status" value="1"/>
</dbReference>
<dbReference type="InterPro" id="IPR001911">
    <property type="entry name" value="Ribosomal_bS21"/>
</dbReference>
<dbReference type="InterPro" id="IPR038380">
    <property type="entry name" value="Ribosomal_bS21_sf"/>
</dbReference>
<dbReference type="NCBIfam" id="TIGR00030">
    <property type="entry name" value="S21p"/>
    <property type="match status" value="1"/>
</dbReference>
<dbReference type="PANTHER" id="PTHR21109">
    <property type="entry name" value="MITOCHONDRIAL 28S RIBOSOMAL PROTEIN S21"/>
    <property type="match status" value="1"/>
</dbReference>
<dbReference type="PANTHER" id="PTHR21109:SF0">
    <property type="entry name" value="SMALL RIBOSOMAL SUBUNIT PROTEIN BS21M"/>
    <property type="match status" value="1"/>
</dbReference>
<dbReference type="Pfam" id="PF01165">
    <property type="entry name" value="Ribosomal_S21"/>
    <property type="match status" value="1"/>
</dbReference>
<dbReference type="PRINTS" id="PR00976">
    <property type="entry name" value="RIBOSOMALS21"/>
</dbReference>
<gene>
    <name evidence="1" type="primary">rpsU</name>
    <name type="ordered locus">SYNAS_26560</name>
    <name type="ORF">SYN_01767</name>
</gene>
<sequence length="63" mass="7546">MEVKVFDNDVEKALKILKNKLSKSGLFKELKVRRAYEKPSVKRKRKAIEARRRFAKVQRRRSS</sequence>
<reference key="1">
    <citation type="journal article" date="2007" name="Proc. Natl. Acad. Sci. U.S.A.">
        <title>The genome of Syntrophus aciditrophicus: life at the thermodynamic limit of microbial growth.</title>
        <authorList>
            <person name="McInerney M.J."/>
            <person name="Rohlin L."/>
            <person name="Mouttaki H."/>
            <person name="Kim U."/>
            <person name="Krupp R.S."/>
            <person name="Rios-Hernandez L."/>
            <person name="Sieber J."/>
            <person name="Struchtemeyer C.G."/>
            <person name="Bhattacharyya A."/>
            <person name="Campbell J.W."/>
            <person name="Gunsalus R.P."/>
        </authorList>
    </citation>
    <scope>NUCLEOTIDE SEQUENCE [LARGE SCALE GENOMIC DNA]</scope>
    <source>
        <strain>SB</strain>
    </source>
</reference>
<organism>
    <name type="scientific">Syntrophus aciditrophicus (strain SB)</name>
    <dbReference type="NCBI Taxonomy" id="56780"/>
    <lineage>
        <taxon>Bacteria</taxon>
        <taxon>Pseudomonadati</taxon>
        <taxon>Thermodesulfobacteriota</taxon>
        <taxon>Syntrophia</taxon>
        <taxon>Syntrophales</taxon>
        <taxon>Syntrophaceae</taxon>
        <taxon>Syntrophus</taxon>
    </lineage>
</organism>
<keyword id="KW-1185">Reference proteome</keyword>
<keyword id="KW-0687">Ribonucleoprotein</keyword>
<keyword id="KW-0689">Ribosomal protein</keyword>
<comment type="similarity">
    <text evidence="1">Belongs to the bacterial ribosomal protein bS21 family.</text>
</comment>
<feature type="chain" id="PRO_0000266791" description="Small ribosomal subunit protein bS21">
    <location>
        <begin position="1"/>
        <end position="63"/>
    </location>
</feature>
<accession>Q2LWS7</accession>
<name>RS21_SYNAS</name>
<protein>
    <recommendedName>
        <fullName evidence="1">Small ribosomal subunit protein bS21</fullName>
    </recommendedName>
    <alternativeName>
        <fullName evidence="2">30S ribosomal protein S21</fullName>
    </alternativeName>
</protein>